<reference key="1">
    <citation type="journal article" date="2002" name="Proc. Natl. Acad. Sci. U.S.A.">
        <title>The Brucella suis genome reveals fundamental similarities between animal and plant pathogens and symbionts.</title>
        <authorList>
            <person name="Paulsen I.T."/>
            <person name="Seshadri R."/>
            <person name="Nelson K.E."/>
            <person name="Eisen J.A."/>
            <person name="Heidelberg J.F."/>
            <person name="Read T.D."/>
            <person name="Dodson R.J."/>
            <person name="Umayam L.A."/>
            <person name="Brinkac L.M."/>
            <person name="Beanan M.J."/>
            <person name="Daugherty S.C."/>
            <person name="DeBoy R.T."/>
            <person name="Durkin A.S."/>
            <person name="Kolonay J.F."/>
            <person name="Madupu R."/>
            <person name="Nelson W.C."/>
            <person name="Ayodeji B."/>
            <person name="Kraul M."/>
            <person name="Shetty J."/>
            <person name="Malek J.A."/>
            <person name="Van Aken S.E."/>
            <person name="Riedmuller S."/>
            <person name="Tettelin H."/>
            <person name="Gill S.R."/>
            <person name="White O."/>
            <person name="Salzberg S.L."/>
            <person name="Hoover D.L."/>
            <person name="Lindler L.E."/>
            <person name="Halling S.M."/>
            <person name="Boyle S.M."/>
            <person name="Fraser C.M."/>
        </authorList>
    </citation>
    <scope>NUCLEOTIDE SEQUENCE [LARGE SCALE GENOMIC DNA]</scope>
    <source>
        <strain>1330</strain>
    </source>
</reference>
<reference key="2">
    <citation type="journal article" date="2011" name="J. Bacteriol.">
        <title>Revised genome sequence of Brucella suis 1330.</title>
        <authorList>
            <person name="Tae H."/>
            <person name="Shallom S."/>
            <person name="Settlage R."/>
            <person name="Preston D."/>
            <person name="Adams L.G."/>
            <person name="Garner H.R."/>
        </authorList>
    </citation>
    <scope>NUCLEOTIDE SEQUENCE [LARGE SCALE GENOMIC DNA]</scope>
    <source>
        <strain>1330</strain>
    </source>
</reference>
<protein>
    <recommendedName>
        <fullName evidence="1">tRNA uridine(34) hydroxylase</fullName>
        <ecNumber evidence="1">1.14.-.-</ecNumber>
    </recommendedName>
    <alternativeName>
        <fullName evidence="1">tRNA hydroxylation protein O</fullName>
    </alternativeName>
</protein>
<feature type="chain" id="PRO_0000161454" description="tRNA uridine(34) hydroxylase">
    <location>
        <begin position="1"/>
        <end position="308"/>
    </location>
</feature>
<feature type="domain" description="Rhodanese" evidence="1">
    <location>
        <begin position="128"/>
        <end position="222"/>
    </location>
</feature>
<feature type="active site" description="Cysteine persulfide intermediate" evidence="1">
    <location>
        <position position="182"/>
    </location>
</feature>
<organism>
    <name type="scientific">Brucella suis biovar 1 (strain 1330)</name>
    <dbReference type="NCBI Taxonomy" id="204722"/>
    <lineage>
        <taxon>Bacteria</taxon>
        <taxon>Pseudomonadati</taxon>
        <taxon>Pseudomonadota</taxon>
        <taxon>Alphaproteobacteria</taxon>
        <taxon>Hyphomicrobiales</taxon>
        <taxon>Brucellaceae</taxon>
        <taxon>Brucella/Ochrobactrum group</taxon>
        <taxon>Brucella</taxon>
    </lineage>
</organism>
<evidence type="ECO:0000255" key="1">
    <source>
        <dbReference type="HAMAP-Rule" id="MF_00469"/>
    </source>
</evidence>
<comment type="function">
    <text evidence="1">Catalyzes oxygen-dependent 5-hydroxyuridine (ho5U) modification at position 34 in tRNAs.</text>
</comment>
<comment type="catalytic activity">
    <reaction evidence="1">
        <text>uridine(34) in tRNA + AH2 + O2 = 5-hydroxyuridine(34) in tRNA + A + H2O</text>
        <dbReference type="Rhea" id="RHEA:64224"/>
        <dbReference type="Rhea" id="RHEA-COMP:11727"/>
        <dbReference type="Rhea" id="RHEA-COMP:13381"/>
        <dbReference type="ChEBI" id="CHEBI:13193"/>
        <dbReference type="ChEBI" id="CHEBI:15377"/>
        <dbReference type="ChEBI" id="CHEBI:15379"/>
        <dbReference type="ChEBI" id="CHEBI:17499"/>
        <dbReference type="ChEBI" id="CHEBI:65315"/>
        <dbReference type="ChEBI" id="CHEBI:136877"/>
    </reaction>
</comment>
<comment type="similarity">
    <text evidence="1">Belongs to the TrhO family.</text>
</comment>
<sequence>MDPMSNLPFTVAALYCFAPLPQYESLREPLAQLCCANGIKGTLLLAAEGINGTVAGSAGAIEKLIAHITAIPGLGEPELKYSHASEMPFHRMKVRLKREIVTMGVEGIDPLKSVGTYIAPKDWNALIADENTVVVDTRNDYEYAIGTFEGAIDPQTRTFREFPEWVKQNRDRLEGKKIAMFCTGGIRCEKATAFVKGLGFDDVYHLKGGILKYLEEVPREQSVWNGECFVFDERVAVGHGLAESDVELCRACRRPLTPQDKLSQFFEEGVSCAGCYAERTPEDRARYAERQKQVKLAEKRGANKHIGS</sequence>
<gene>
    <name evidence="1" type="primary">trhO</name>
    <name type="ordered locus">BRA0086</name>
    <name type="ordered locus">BS1330_II0086</name>
</gene>
<name>TRHO_BRUSU</name>
<keyword id="KW-0560">Oxidoreductase</keyword>
<keyword id="KW-0819">tRNA processing</keyword>
<accession>Q8FXJ1</accession>
<accession>G0KET2</accession>
<proteinExistence type="inferred from homology"/>
<dbReference type="EC" id="1.14.-.-" evidence="1"/>
<dbReference type="EMBL" id="AE014292">
    <property type="protein sequence ID" value="AAN33296.1"/>
    <property type="molecule type" value="Genomic_DNA"/>
</dbReference>
<dbReference type="EMBL" id="CP002998">
    <property type="protein sequence ID" value="AEM19576.1"/>
    <property type="molecule type" value="Genomic_DNA"/>
</dbReference>
<dbReference type="SMR" id="Q8FXJ1"/>
<dbReference type="KEGG" id="bms:BRA0086"/>
<dbReference type="KEGG" id="bsi:BS1330_II0086"/>
<dbReference type="HOGENOM" id="CLU_038878_0_0_5"/>
<dbReference type="Proteomes" id="UP000007104">
    <property type="component" value="Chromosome II"/>
</dbReference>
<dbReference type="GO" id="GO:0016705">
    <property type="term" value="F:oxidoreductase activity, acting on paired donors, with incorporation or reduction of molecular oxygen"/>
    <property type="evidence" value="ECO:0007669"/>
    <property type="project" value="UniProtKB-UniRule"/>
</dbReference>
<dbReference type="GO" id="GO:0006400">
    <property type="term" value="P:tRNA modification"/>
    <property type="evidence" value="ECO:0007669"/>
    <property type="project" value="UniProtKB-UniRule"/>
</dbReference>
<dbReference type="CDD" id="cd01518">
    <property type="entry name" value="RHOD_YceA"/>
    <property type="match status" value="1"/>
</dbReference>
<dbReference type="Gene3D" id="3.30.70.100">
    <property type="match status" value="1"/>
</dbReference>
<dbReference type="Gene3D" id="3.40.250.10">
    <property type="entry name" value="Rhodanese-like domain"/>
    <property type="match status" value="1"/>
</dbReference>
<dbReference type="HAMAP" id="MF_00469">
    <property type="entry name" value="TrhO"/>
    <property type="match status" value="1"/>
</dbReference>
<dbReference type="InterPro" id="IPR001763">
    <property type="entry name" value="Rhodanese-like_dom"/>
</dbReference>
<dbReference type="InterPro" id="IPR036873">
    <property type="entry name" value="Rhodanese-like_dom_sf"/>
</dbReference>
<dbReference type="InterPro" id="IPR020936">
    <property type="entry name" value="TrhO"/>
</dbReference>
<dbReference type="InterPro" id="IPR040503">
    <property type="entry name" value="TRHO_N"/>
</dbReference>
<dbReference type="NCBIfam" id="NF001136">
    <property type="entry name" value="PRK00142.1-4"/>
    <property type="match status" value="1"/>
</dbReference>
<dbReference type="PANTHER" id="PTHR43268:SF3">
    <property type="entry name" value="RHODANESE-LIKE DOMAIN-CONTAINING PROTEIN 7-RELATED"/>
    <property type="match status" value="1"/>
</dbReference>
<dbReference type="PANTHER" id="PTHR43268">
    <property type="entry name" value="THIOSULFATE SULFURTRANSFERASE/RHODANESE-LIKE DOMAIN-CONTAINING PROTEIN 2"/>
    <property type="match status" value="1"/>
</dbReference>
<dbReference type="Pfam" id="PF00581">
    <property type="entry name" value="Rhodanese"/>
    <property type="match status" value="1"/>
</dbReference>
<dbReference type="Pfam" id="PF17773">
    <property type="entry name" value="UPF0176_N"/>
    <property type="match status" value="1"/>
</dbReference>
<dbReference type="SMART" id="SM00450">
    <property type="entry name" value="RHOD"/>
    <property type="match status" value="1"/>
</dbReference>
<dbReference type="SUPFAM" id="SSF52821">
    <property type="entry name" value="Rhodanese/Cell cycle control phosphatase"/>
    <property type="match status" value="1"/>
</dbReference>
<dbReference type="PROSITE" id="PS50206">
    <property type="entry name" value="RHODANESE_3"/>
    <property type="match status" value="1"/>
</dbReference>